<proteinExistence type="inferred from homology"/>
<dbReference type="EMBL" id="CP000117">
    <property type="protein sequence ID" value="ABA22231.1"/>
    <property type="molecule type" value="Genomic_DNA"/>
</dbReference>
<dbReference type="SMR" id="Q3M9V5"/>
<dbReference type="STRING" id="240292.Ava_2616"/>
<dbReference type="KEGG" id="ava:Ava_2616"/>
<dbReference type="eggNOG" id="COG0356">
    <property type="taxonomic scope" value="Bacteria"/>
</dbReference>
<dbReference type="HOGENOM" id="CLU_041018_2_4_3"/>
<dbReference type="Proteomes" id="UP000002533">
    <property type="component" value="Chromosome"/>
</dbReference>
<dbReference type="GO" id="GO:0031676">
    <property type="term" value="C:plasma membrane-derived thylakoid membrane"/>
    <property type="evidence" value="ECO:0007669"/>
    <property type="project" value="UniProtKB-SubCell"/>
</dbReference>
<dbReference type="GO" id="GO:0045259">
    <property type="term" value="C:proton-transporting ATP synthase complex"/>
    <property type="evidence" value="ECO:0007669"/>
    <property type="project" value="UniProtKB-KW"/>
</dbReference>
<dbReference type="GO" id="GO:0046933">
    <property type="term" value="F:proton-transporting ATP synthase activity, rotational mechanism"/>
    <property type="evidence" value="ECO:0007669"/>
    <property type="project" value="UniProtKB-UniRule"/>
</dbReference>
<dbReference type="CDD" id="cd00310">
    <property type="entry name" value="ATP-synt_Fo_a_6"/>
    <property type="match status" value="1"/>
</dbReference>
<dbReference type="FunFam" id="1.20.120.220:FF:000001">
    <property type="entry name" value="ATP synthase subunit a, chloroplastic"/>
    <property type="match status" value="1"/>
</dbReference>
<dbReference type="Gene3D" id="1.20.120.220">
    <property type="entry name" value="ATP synthase, F0 complex, subunit A"/>
    <property type="match status" value="1"/>
</dbReference>
<dbReference type="HAMAP" id="MF_01393">
    <property type="entry name" value="ATP_synth_a_bact"/>
    <property type="match status" value="1"/>
</dbReference>
<dbReference type="InterPro" id="IPR045082">
    <property type="entry name" value="ATP_syn_F0_a_bact/chloroplast"/>
</dbReference>
<dbReference type="InterPro" id="IPR000568">
    <property type="entry name" value="ATP_synth_F0_asu"/>
</dbReference>
<dbReference type="InterPro" id="IPR023011">
    <property type="entry name" value="ATP_synth_F0_asu_AS"/>
</dbReference>
<dbReference type="InterPro" id="IPR035908">
    <property type="entry name" value="F0_ATP_A_sf"/>
</dbReference>
<dbReference type="NCBIfam" id="TIGR01131">
    <property type="entry name" value="ATP_synt_6_or_A"/>
    <property type="match status" value="1"/>
</dbReference>
<dbReference type="PANTHER" id="PTHR42823">
    <property type="entry name" value="ATP SYNTHASE SUBUNIT A, CHLOROPLASTIC"/>
    <property type="match status" value="1"/>
</dbReference>
<dbReference type="PANTHER" id="PTHR42823:SF3">
    <property type="entry name" value="ATP SYNTHASE SUBUNIT A, CHLOROPLASTIC"/>
    <property type="match status" value="1"/>
</dbReference>
<dbReference type="Pfam" id="PF00119">
    <property type="entry name" value="ATP-synt_A"/>
    <property type="match status" value="1"/>
</dbReference>
<dbReference type="PRINTS" id="PR00123">
    <property type="entry name" value="ATPASEA"/>
</dbReference>
<dbReference type="SUPFAM" id="SSF81336">
    <property type="entry name" value="F1F0 ATP synthase subunit A"/>
    <property type="match status" value="1"/>
</dbReference>
<dbReference type="PROSITE" id="PS00449">
    <property type="entry name" value="ATPASE_A"/>
    <property type="match status" value="1"/>
</dbReference>
<accession>Q3M9V5</accession>
<gene>
    <name evidence="1" type="primary">atpB</name>
    <name evidence="1" type="synonym">atpI</name>
    <name type="ordered locus">Ava_2616</name>
</gene>
<feature type="chain" id="PRO_0000362232" description="ATP synthase subunit a">
    <location>
        <begin position="1"/>
        <end position="251"/>
    </location>
</feature>
<feature type="transmembrane region" description="Helical" evidence="1">
    <location>
        <begin position="34"/>
        <end position="54"/>
    </location>
</feature>
<feature type="transmembrane region" description="Helical" evidence="1">
    <location>
        <begin position="93"/>
        <end position="113"/>
    </location>
</feature>
<feature type="transmembrane region" description="Helical" evidence="1">
    <location>
        <begin position="130"/>
        <end position="150"/>
    </location>
</feature>
<feature type="transmembrane region" description="Helical" evidence="1">
    <location>
        <begin position="195"/>
        <end position="215"/>
    </location>
</feature>
<feature type="transmembrane region" description="Helical" evidence="1">
    <location>
        <begin position="216"/>
        <end position="236"/>
    </location>
</feature>
<evidence type="ECO:0000255" key="1">
    <source>
        <dbReference type="HAMAP-Rule" id="MF_01393"/>
    </source>
</evidence>
<name>ATP6_TRIV2</name>
<protein>
    <recommendedName>
        <fullName evidence="1">ATP synthase subunit a</fullName>
    </recommendedName>
    <alternativeName>
        <fullName evidence="1">ATP synthase F0 sector subunit a</fullName>
    </alternativeName>
    <alternativeName>
        <fullName evidence="1">F-ATPase subunit 6</fullName>
    </alternativeName>
</protein>
<comment type="function">
    <text evidence="1">Key component of the proton channel; it plays a direct role in the translocation of protons across the membrane.</text>
</comment>
<comment type="subunit">
    <text evidence="1">F-type ATPases have 2 components, CF(1) - the catalytic core - and CF(0) - the membrane proton channel. CF(1) has five subunits: alpha(3), beta(3), gamma(1), delta(1), epsilon(1). CF(0) has four main subunits: a, b, b' and c.</text>
</comment>
<comment type="subcellular location">
    <subcellularLocation>
        <location evidence="1">Cellular thylakoid membrane</location>
        <topology evidence="1">Multi-pass membrane protein</topology>
    </subcellularLocation>
</comment>
<comment type="similarity">
    <text evidence="1">Belongs to the ATPase A chain family.</text>
</comment>
<organism>
    <name type="scientific">Trichormus variabilis (strain ATCC 29413 / PCC 7937)</name>
    <name type="common">Anabaena variabilis</name>
    <dbReference type="NCBI Taxonomy" id="240292"/>
    <lineage>
        <taxon>Bacteria</taxon>
        <taxon>Bacillati</taxon>
        <taxon>Cyanobacteriota</taxon>
        <taxon>Cyanophyceae</taxon>
        <taxon>Nostocales</taxon>
        <taxon>Nostocaceae</taxon>
        <taxon>Trichormus</taxon>
    </lineage>
</organism>
<keyword id="KW-0066">ATP synthesis</keyword>
<keyword id="KW-0138">CF(0)</keyword>
<keyword id="KW-0375">Hydrogen ion transport</keyword>
<keyword id="KW-0406">Ion transport</keyword>
<keyword id="KW-0472">Membrane</keyword>
<keyword id="KW-0793">Thylakoid</keyword>
<keyword id="KW-0812">Transmembrane</keyword>
<keyword id="KW-1133">Transmembrane helix</keyword>
<keyword id="KW-0813">Transport</keyword>
<sequence length="251" mass="27876">MLNFLNFYSVPLAELEVGKHLYWQIGNLKLHGQVFLTSWFVIGVLVLASVAASSNVKRIPSGIQNLLEYALEFIRDLAKNQIGEKEYRPWVPFVGTLFLFIFVSNWSGALVPFKLIHLPEGELAAPTSDINTTVALALLTSLAYFYAGFSKKGLGYFGNYVQPVSFMLPFKIIEDFTKPLSLSFRLFGNILADELVVGVLVLLVPLFVPLPVMALGLFTSAIQALIFATLAAAYIGEAMEDHHGEEHEEHH</sequence>
<reference key="1">
    <citation type="journal article" date="2014" name="Stand. Genomic Sci.">
        <title>Complete genome sequence of Anabaena variabilis ATCC 29413.</title>
        <authorList>
            <person name="Thiel T."/>
            <person name="Pratte B.S."/>
            <person name="Zhong J."/>
            <person name="Goodwin L."/>
            <person name="Copeland A."/>
            <person name="Lucas S."/>
            <person name="Han C."/>
            <person name="Pitluck S."/>
            <person name="Land M.L."/>
            <person name="Kyrpides N.C."/>
            <person name="Woyke T."/>
        </authorList>
    </citation>
    <scope>NUCLEOTIDE SEQUENCE [LARGE SCALE GENOMIC DNA]</scope>
    <source>
        <strain>ATCC 29413 / PCC 7937</strain>
    </source>
</reference>